<accession>B7N459</accession>
<reference key="1">
    <citation type="journal article" date="2009" name="PLoS Genet.">
        <title>Organised genome dynamics in the Escherichia coli species results in highly diverse adaptive paths.</title>
        <authorList>
            <person name="Touchon M."/>
            <person name="Hoede C."/>
            <person name="Tenaillon O."/>
            <person name="Barbe V."/>
            <person name="Baeriswyl S."/>
            <person name="Bidet P."/>
            <person name="Bingen E."/>
            <person name="Bonacorsi S."/>
            <person name="Bouchier C."/>
            <person name="Bouvet O."/>
            <person name="Calteau A."/>
            <person name="Chiapello H."/>
            <person name="Clermont O."/>
            <person name="Cruveiller S."/>
            <person name="Danchin A."/>
            <person name="Diard M."/>
            <person name="Dossat C."/>
            <person name="Karoui M.E."/>
            <person name="Frapy E."/>
            <person name="Garry L."/>
            <person name="Ghigo J.M."/>
            <person name="Gilles A.M."/>
            <person name="Johnson J."/>
            <person name="Le Bouguenec C."/>
            <person name="Lescat M."/>
            <person name="Mangenot S."/>
            <person name="Martinez-Jehanne V."/>
            <person name="Matic I."/>
            <person name="Nassif X."/>
            <person name="Oztas S."/>
            <person name="Petit M.A."/>
            <person name="Pichon C."/>
            <person name="Rouy Z."/>
            <person name="Ruf C.S."/>
            <person name="Schneider D."/>
            <person name="Tourret J."/>
            <person name="Vacherie B."/>
            <person name="Vallenet D."/>
            <person name="Medigue C."/>
            <person name="Rocha E.P.C."/>
            <person name="Denamur E."/>
        </authorList>
    </citation>
    <scope>NUCLEOTIDE SEQUENCE [LARGE SCALE GENOMIC DNA]</scope>
    <source>
        <strain>UMN026 / ExPEC</strain>
    </source>
</reference>
<gene>
    <name evidence="1" type="primary">yciU</name>
    <name type="ordered locus">ECUMN_1545</name>
</gene>
<sequence>MDMDLNNRLTEDETLEQAYDIFLELAADNLDPADVLLFNLQFEERGGAELFDPAEDWQEHVDFDLNPDFFAEVVIGLADSEDGEINDVFARILLCREKDHKLCHIIWRE</sequence>
<feature type="chain" id="PRO_1000131705" description="Putative double-stranded DNA mimic protein YciU">
    <location>
        <begin position="1"/>
        <end position="109"/>
    </location>
</feature>
<protein>
    <recommendedName>
        <fullName evidence="1">Putative double-stranded DNA mimic protein YciU</fullName>
    </recommendedName>
</protein>
<name>YCIU_ECOLU</name>
<organism>
    <name type="scientific">Escherichia coli O17:K52:H18 (strain UMN026 / ExPEC)</name>
    <dbReference type="NCBI Taxonomy" id="585056"/>
    <lineage>
        <taxon>Bacteria</taxon>
        <taxon>Pseudomonadati</taxon>
        <taxon>Pseudomonadota</taxon>
        <taxon>Gammaproteobacteria</taxon>
        <taxon>Enterobacterales</taxon>
        <taxon>Enterobacteriaceae</taxon>
        <taxon>Escherichia</taxon>
    </lineage>
</organism>
<dbReference type="EMBL" id="CU928163">
    <property type="protein sequence ID" value="CAR12752.1"/>
    <property type="molecule type" value="Genomic_DNA"/>
</dbReference>
<dbReference type="RefSeq" id="WP_000366959.1">
    <property type="nucleotide sequence ID" value="NC_011751.1"/>
</dbReference>
<dbReference type="RefSeq" id="YP_002412288.1">
    <property type="nucleotide sequence ID" value="NC_011751.1"/>
</dbReference>
<dbReference type="SMR" id="B7N459"/>
<dbReference type="STRING" id="585056.ECUMN_1545"/>
<dbReference type="KEGG" id="eum:ECUMN_1545"/>
<dbReference type="PATRIC" id="fig|585056.7.peg.1743"/>
<dbReference type="HOGENOM" id="CLU_143392_0_0_6"/>
<dbReference type="Proteomes" id="UP000007097">
    <property type="component" value="Chromosome"/>
</dbReference>
<dbReference type="Gene3D" id="3.10.450.140">
    <property type="entry name" value="dsDNA mimic, putative"/>
    <property type="match status" value="1"/>
</dbReference>
<dbReference type="HAMAP" id="MF_00680">
    <property type="entry name" value="Put_dsDNA_mimic"/>
    <property type="match status" value="1"/>
</dbReference>
<dbReference type="InterPro" id="IPR007376">
    <property type="entry name" value="dsDNA_mimic_put"/>
</dbReference>
<dbReference type="InterPro" id="IPR036763">
    <property type="entry name" value="Put_dsDNA_mimic_sf"/>
</dbReference>
<dbReference type="NCBIfam" id="NF003469">
    <property type="entry name" value="PRK05094.1"/>
    <property type="match status" value="1"/>
</dbReference>
<dbReference type="Pfam" id="PF04269">
    <property type="entry name" value="DUF440"/>
    <property type="match status" value="1"/>
</dbReference>
<dbReference type="PIRSF" id="PIRSF004916">
    <property type="entry name" value="UCP004916"/>
    <property type="match status" value="1"/>
</dbReference>
<dbReference type="SUPFAM" id="SSF102816">
    <property type="entry name" value="Putative dsDNA mimic"/>
    <property type="match status" value="1"/>
</dbReference>
<evidence type="ECO:0000255" key="1">
    <source>
        <dbReference type="HAMAP-Rule" id="MF_00680"/>
    </source>
</evidence>
<proteinExistence type="inferred from homology"/>
<comment type="function">
    <text evidence="1">May act as a double-stranded DNA (dsDNA) mimic. Probably regulates the activity of a dsDNA-binding protein.</text>
</comment>
<comment type="similarity">
    <text evidence="1">Belongs to the putative dsDNA mimic protein family.</text>
</comment>